<accession>P05683</accession>
<sequence length="312" mass="34606">MPLLGVTRKERDPATKLTANIGNALREQNDRLSRAEEIERRLAEGQAVIELDASSIEPSFVQDRMRGDIDGLLTSIREQGQQVPILVRPHPSQPGRYQVAFGHRRLRAVSELGLPVRAVVRELTDEQVVVAQGQENNEREDLTFIEKARFAHRLNRQFSREIVIAAMSIDKSNLSKMLLLVDALPSELTDAIGAAPGVGRPSWQQLAELIEKVSSPADVAKYAMSEEVQALPSAERFKAVIASLKPSRVARGLPEVMATPDGTRIAQVTQSKAKLEITIDRKATPDFATFVLDHVPALYQAYHAENQRKRGE</sequence>
<feature type="chain" id="PRO_0000178700" description="Putative replication protein B">
    <location>
        <begin position="1"/>
        <end position="312"/>
    </location>
</feature>
<gene>
    <name type="primary">repB</name>
</gene>
<organism>
    <name type="scientific">Rhizobium rhizogenes</name>
    <name type="common">Agrobacterium rhizogenes</name>
    <dbReference type="NCBI Taxonomy" id="359"/>
    <lineage>
        <taxon>Bacteria</taxon>
        <taxon>Pseudomonadati</taxon>
        <taxon>Pseudomonadota</taxon>
        <taxon>Alphaproteobacteria</taxon>
        <taxon>Hyphomicrobiales</taxon>
        <taxon>Rhizobiaceae</taxon>
        <taxon>Rhizobium/Agrobacterium group</taxon>
        <taxon>Rhizobium</taxon>
    </lineage>
</organism>
<evidence type="ECO:0000305" key="1"/>
<reference key="1">
    <citation type="journal article" date="1987" name="Mol. Gen. Genet.">
        <title>Characterization and sequence determination of the replicator region in the hairy-root-inducing plasmid pRiA4b.</title>
        <authorList>
            <person name="Nishiguchi R."/>
            <person name="Takanami M."/>
            <person name="Oka A."/>
        </authorList>
    </citation>
    <scope>NUCLEOTIDE SEQUENCE [GENOMIC DNA]</scope>
    <source>
        <strain>A4</strain>
    </source>
</reference>
<protein>
    <recommendedName>
        <fullName>Putative replication protein B</fullName>
    </recommendedName>
</protein>
<comment type="function">
    <text>This protein is coded by a hairy root Ri plasmid, it is probably involved in its replication.</text>
</comment>
<comment type="similarity">
    <text evidence="1">Belongs to the ParB family.</text>
</comment>
<proteinExistence type="inferred from homology"/>
<name>REPB_RHIRH</name>
<geneLocation type="plasmid">
    <name>pRiA4b</name>
</geneLocation>
<keyword id="KW-0159">Chromosome partition</keyword>
<keyword id="KW-0235">DNA replication</keyword>
<keyword id="KW-0238">DNA-binding</keyword>
<keyword id="KW-0614">Plasmid</keyword>
<dbReference type="EMBL" id="X04833">
    <property type="protein sequence ID" value="CAA28530.1"/>
    <property type="molecule type" value="Genomic_DNA"/>
</dbReference>
<dbReference type="PIR" id="E32534">
    <property type="entry name" value="E32534"/>
</dbReference>
<dbReference type="SMR" id="P05683"/>
<dbReference type="eggNOG" id="COG1475">
    <property type="taxonomic scope" value="Bacteria"/>
</dbReference>
<dbReference type="GO" id="GO:0005694">
    <property type="term" value="C:chromosome"/>
    <property type="evidence" value="ECO:0007669"/>
    <property type="project" value="TreeGrafter"/>
</dbReference>
<dbReference type="GO" id="GO:0003677">
    <property type="term" value="F:DNA binding"/>
    <property type="evidence" value="ECO:0007669"/>
    <property type="project" value="UniProtKB-KW"/>
</dbReference>
<dbReference type="GO" id="GO:0007059">
    <property type="term" value="P:chromosome segregation"/>
    <property type="evidence" value="ECO:0007669"/>
    <property type="project" value="UniProtKB-KW"/>
</dbReference>
<dbReference type="GO" id="GO:0006260">
    <property type="term" value="P:DNA replication"/>
    <property type="evidence" value="ECO:0007669"/>
    <property type="project" value="UniProtKB-KW"/>
</dbReference>
<dbReference type="CDD" id="cd16405">
    <property type="entry name" value="RepB_like_N"/>
    <property type="match status" value="1"/>
</dbReference>
<dbReference type="Gene3D" id="1.10.10.2830">
    <property type="match status" value="1"/>
</dbReference>
<dbReference type="Gene3D" id="3.90.1530.30">
    <property type="match status" value="1"/>
</dbReference>
<dbReference type="InterPro" id="IPR050336">
    <property type="entry name" value="Chromosome_partition/occlusion"/>
</dbReference>
<dbReference type="InterPro" id="IPR004437">
    <property type="entry name" value="ParB/RepB/Spo0J"/>
</dbReference>
<dbReference type="InterPro" id="IPR003115">
    <property type="entry name" value="ParB/Sulfiredoxin_dom"/>
</dbReference>
<dbReference type="InterPro" id="IPR036086">
    <property type="entry name" value="ParB/Sulfiredoxin_sf"/>
</dbReference>
<dbReference type="InterPro" id="IPR017819">
    <property type="entry name" value="Plasmid_partition_RepB"/>
</dbReference>
<dbReference type="InterPro" id="IPR011111">
    <property type="entry name" value="Plasmid_RepB"/>
</dbReference>
<dbReference type="InterPro" id="IPR037972">
    <property type="entry name" value="RepB_N"/>
</dbReference>
<dbReference type="NCBIfam" id="TIGR00180">
    <property type="entry name" value="parB_part"/>
    <property type="match status" value="1"/>
</dbReference>
<dbReference type="NCBIfam" id="TIGR03454">
    <property type="entry name" value="partition_RepB"/>
    <property type="match status" value="1"/>
</dbReference>
<dbReference type="PANTHER" id="PTHR33375">
    <property type="entry name" value="CHROMOSOME-PARTITIONING PROTEIN PARB-RELATED"/>
    <property type="match status" value="1"/>
</dbReference>
<dbReference type="PANTHER" id="PTHR33375:SF1">
    <property type="entry name" value="CHROMOSOME-PARTITIONING PROTEIN PARB-RELATED"/>
    <property type="match status" value="1"/>
</dbReference>
<dbReference type="Pfam" id="PF02195">
    <property type="entry name" value="ParBc"/>
    <property type="match status" value="1"/>
</dbReference>
<dbReference type="Pfam" id="PF07506">
    <property type="entry name" value="RepB"/>
    <property type="match status" value="1"/>
</dbReference>
<dbReference type="SMART" id="SM00470">
    <property type="entry name" value="ParB"/>
    <property type="match status" value="1"/>
</dbReference>
<dbReference type="SUPFAM" id="SSF110849">
    <property type="entry name" value="ParB/Sulfiredoxin"/>
    <property type="match status" value="1"/>
</dbReference>